<keyword id="KW-0413">Isomerase</keyword>
<keyword id="KW-1185">Reference proteome</keyword>
<keyword id="KW-0819">tRNA processing</keyword>
<dbReference type="EC" id="5.4.99.25" evidence="1"/>
<dbReference type="EMBL" id="CP000362">
    <property type="protein sequence ID" value="ABG30345.1"/>
    <property type="molecule type" value="Genomic_DNA"/>
</dbReference>
<dbReference type="RefSeq" id="WP_011566967.1">
    <property type="nucleotide sequence ID" value="NC_008209.1"/>
</dbReference>
<dbReference type="SMR" id="Q16CE8"/>
<dbReference type="STRING" id="375451.RD1_0647"/>
<dbReference type="KEGG" id="rde:RD1_0647"/>
<dbReference type="eggNOG" id="COG0130">
    <property type="taxonomic scope" value="Bacteria"/>
</dbReference>
<dbReference type="HOGENOM" id="CLU_032087_0_3_5"/>
<dbReference type="OrthoDB" id="9802309at2"/>
<dbReference type="Proteomes" id="UP000007029">
    <property type="component" value="Chromosome"/>
</dbReference>
<dbReference type="GO" id="GO:0003723">
    <property type="term" value="F:RNA binding"/>
    <property type="evidence" value="ECO:0007669"/>
    <property type="project" value="InterPro"/>
</dbReference>
<dbReference type="GO" id="GO:0160148">
    <property type="term" value="F:tRNA pseudouridine(55) synthase activity"/>
    <property type="evidence" value="ECO:0007669"/>
    <property type="project" value="UniProtKB-EC"/>
</dbReference>
<dbReference type="GO" id="GO:1990481">
    <property type="term" value="P:mRNA pseudouridine synthesis"/>
    <property type="evidence" value="ECO:0007669"/>
    <property type="project" value="TreeGrafter"/>
</dbReference>
<dbReference type="GO" id="GO:0031119">
    <property type="term" value="P:tRNA pseudouridine synthesis"/>
    <property type="evidence" value="ECO:0007669"/>
    <property type="project" value="UniProtKB-UniRule"/>
</dbReference>
<dbReference type="CDD" id="cd02573">
    <property type="entry name" value="PseudoU_synth_EcTruB"/>
    <property type="match status" value="1"/>
</dbReference>
<dbReference type="Gene3D" id="3.30.2350.10">
    <property type="entry name" value="Pseudouridine synthase"/>
    <property type="match status" value="1"/>
</dbReference>
<dbReference type="HAMAP" id="MF_01080">
    <property type="entry name" value="TruB_bact"/>
    <property type="match status" value="1"/>
</dbReference>
<dbReference type="InterPro" id="IPR020103">
    <property type="entry name" value="PsdUridine_synth_cat_dom_sf"/>
</dbReference>
<dbReference type="InterPro" id="IPR002501">
    <property type="entry name" value="PsdUridine_synth_N"/>
</dbReference>
<dbReference type="InterPro" id="IPR014780">
    <property type="entry name" value="tRNA_psdUridine_synth_TruB"/>
</dbReference>
<dbReference type="InterPro" id="IPR032819">
    <property type="entry name" value="TruB_C"/>
</dbReference>
<dbReference type="NCBIfam" id="TIGR00431">
    <property type="entry name" value="TruB"/>
    <property type="match status" value="1"/>
</dbReference>
<dbReference type="PANTHER" id="PTHR13767:SF2">
    <property type="entry name" value="PSEUDOURIDYLATE SYNTHASE TRUB1"/>
    <property type="match status" value="1"/>
</dbReference>
<dbReference type="PANTHER" id="PTHR13767">
    <property type="entry name" value="TRNA-PSEUDOURIDINE SYNTHASE"/>
    <property type="match status" value="1"/>
</dbReference>
<dbReference type="Pfam" id="PF16198">
    <property type="entry name" value="TruB_C_2"/>
    <property type="match status" value="1"/>
</dbReference>
<dbReference type="Pfam" id="PF01509">
    <property type="entry name" value="TruB_N"/>
    <property type="match status" value="1"/>
</dbReference>
<dbReference type="SUPFAM" id="SSF55120">
    <property type="entry name" value="Pseudouridine synthase"/>
    <property type="match status" value="1"/>
</dbReference>
<accession>Q16CE8</accession>
<organism>
    <name type="scientific">Roseobacter denitrificans (strain ATCC 33942 / OCh 114)</name>
    <name type="common">Erythrobacter sp. (strain OCh 114)</name>
    <name type="synonym">Roseobacter denitrificans</name>
    <dbReference type="NCBI Taxonomy" id="375451"/>
    <lineage>
        <taxon>Bacteria</taxon>
        <taxon>Pseudomonadati</taxon>
        <taxon>Pseudomonadota</taxon>
        <taxon>Alphaproteobacteria</taxon>
        <taxon>Rhodobacterales</taxon>
        <taxon>Roseobacteraceae</taxon>
        <taxon>Roseobacter</taxon>
    </lineage>
</organism>
<evidence type="ECO:0000255" key="1">
    <source>
        <dbReference type="HAMAP-Rule" id="MF_01080"/>
    </source>
</evidence>
<proteinExistence type="inferred from homology"/>
<gene>
    <name evidence="1" type="primary">truB</name>
    <name type="ordered locus">RD1_0647</name>
</gene>
<feature type="chain" id="PRO_1000084664" description="tRNA pseudouridine synthase B">
    <location>
        <begin position="1"/>
        <end position="303"/>
    </location>
</feature>
<feature type="active site" description="Nucleophile" evidence="1">
    <location>
        <position position="47"/>
    </location>
</feature>
<comment type="function">
    <text evidence="1">Responsible for synthesis of pseudouridine from uracil-55 in the psi GC loop of transfer RNAs.</text>
</comment>
<comment type="catalytic activity">
    <reaction evidence="1">
        <text>uridine(55) in tRNA = pseudouridine(55) in tRNA</text>
        <dbReference type="Rhea" id="RHEA:42532"/>
        <dbReference type="Rhea" id="RHEA-COMP:10101"/>
        <dbReference type="Rhea" id="RHEA-COMP:10102"/>
        <dbReference type="ChEBI" id="CHEBI:65314"/>
        <dbReference type="ChEBI" id="CHEBI:65315"/>
        <dbReference type="EC" id="5.4.99.25"/>
    </reaction>
</comment>
<comment type="similarity">
    <text evidence="1">Belongs to the pseudouridine synthase TruB family. Type 1 subfamily.</text>
</comment>
<name>TRUB_ROSDO</name>
<reference key="1">
    <citation type="journal article" date="2007" name="J. Bacteriol.">
        <title>The complete genome sequence of Roseobacter denitrificans reveals a mixotrophic rather than photosynthetic metabolism.</title>
        <authorList>
            <person name="Swingley W.D."/>
            <person name="Sadekar S."/>
            <person name="Mastrian S.D."/>
            <person name="Matthies H.J."/>
            <person name="Hao J."/>
            <person name="Ramos H."/>
            <person name="Acharya C.R."/>
            <person name="Conrad A.L."/>
            <person name="Taylor H.L."/>
            <person name="Dejesa L.C."/>
            <person name="Shah M.K."/>
            <person name="O'Huallachain M.E."/>
            <person name="Lince M.T."/>
            <person name="Blankenship R.E."/>
            <person name="Beatty J.T."/>
            <person name="Touchman J.W."/>
        </authorList>
    </citation>
    <scope>NUCLEOTIDE SEQUENCE [LARGE SCALE GENOMIC DNA]</scope>
    <source>
        <strain>ATCC 33942 / OCh 114</strain>
    </source>
</reference>
<protein>
    <recommendedName>
        <fullName evidence="1">tRNA pseudouridine synthase B</fullName>
        <ecNumber evidence="1">5.4.99.25</ecNumber>
    </recommendedName>
    <alternativeName>
        <fullName evidence="1">tRNA pseudouridine(55) synthase</fullName>
        <shortName evidence="1">Psi55 synthase</shortName>
    </alternativeName>
    <alternativeName>
        <fullName evidence="1">tRNA pseudouridylate synthase</fullName>
    </alternativeName>
    <alternativeName>
        <fullName evidence="1">tRNA-uridine isomerase</fullName>
    </alternativeName>
</protein>
<sequence length="303" mass="32612">MGRRRKGRDISGWLIVDKPAGLTSTAVVNKVRWALDAKKAGHAGTLDPDATGVLAVALGEATKTVPYVTGALKAYEFEIRLGQATNTDDAEGEVIAQSDLRPTEDEIKEALSAFIGDIEQVPPQFSAVKVDGERAYKRARDGEEMTLAARPLYVDSLLLIDRPDADHVLLEMVCGKGGYVRSIARDLGAALGCLAHVRSLRRIWSGPFDAKNAADLETIEALARTPELDAHVQPLETALDDMPEVKATAEGAVRLRNGNPGMVLASGIEYGETCWASFESRAIAIGRYKSGELHPVRVINAPD</sequence>